<dbReference type="EMBL" id="AF507946">
    <property type="protein sequence ID" value="AAM33359.1"/>
    <property type="molecule type" value="mRNA"/>
</dbReference>
<dbReference type="EMBL" id="BT007400">
    <property type="protein sequence ID" value="AAP36064.1"/>
    <property type="molecule type" value="mRNA"/>
</dbReference>
<dbReference type="EMBL" id="AL080123">
    <property type="protein sequence ID" value="CAB45722.1"/>
    <property type="molecule type" value="mRNA"/>
</dbReference>
<dbReference type="EMBL" id="AL833815">
    <property type="protein sequence ID" value="CAD38678.1"/>
    <property type="molecule type" value="mRNA"/>
</dbReference>
<dbReference type="EMBL" id="AC010547">
    <property type="status" value="NOT_ANNOTATED_CDS"/>
    <property type="molecule type" value="Genomic_DNA"/>
</dbReference>
<dbReference type="EMBL" id="BC007256">
    <property type="protein sequence ID" value="AAH07256.1"/>
    <property type="molecule type" value="mRNA"/>
</dbReference>
<dbReference type="EMBL" id="BC048974">
    <property type="protein sequence ID" value="AAH48974.1"/>
    <property type="molecule type" value="mRNA"/>
</dbReference>
<dbReference type="EMBL" id="X52347">
    <property type="protein sequence ID" value="CAA36573.1"/>
    <property type="molecule type" value="mRNA"/>
</dbReference>
<dbReference type="CCDS" id="CCDS10900.1">
    <molecule id="P17027-1"/>
</dbReference>
<dbReference type="CCDS" id="CCDS76895.1">
    <molecule id="P17027-2"/>
</dbReference>
<dbReference type="PIR" id="T12488">
    <property type="entry name" value="T12488"/>
</dbReference>
<dbReference type="RefSeq" id="NP_001291421.1">
    <molecule id="P17027-1"/>
    <property type="nucleotide sequence ID" value="NM_001304492.2"/>
</dbReference>
<dbReference type="RefSeq" id="NP_001291422.1">
    <molecule id="P17027-2"/>
    <property type="nucleotide sequence ID" value="NM_001304493.2"/>
</dbReference>
<dbReference type="RefSeq" id="NP_001291423.1">
    <molecule id="P17027-2"/>
    <property type="nucleotide sequence ID" value="NM_001304494.2"/>
</dbReference>
<dbReference type="RefSeq" id="NP_001368894.1">
    <molecule id="P17027-1"/>
    <property type="nucleotide sequence ID" value="NM_001381965.1"/>
</dbReference>
<dbReference type="RefSeq" id="NP_001368895.1">
    <molecule id="P17027-1"/>
    <property type="nucleotide sequence ID" value="NM_001381966.1"/>
</dbReference>
<dbReference type="RefSeq" id="NP_001368896.1">
    <molecule id="P17027-2"/>
    <property type="nucleotide sequence ID" value="NM_001381967.1"/>
</dbReference>
<dbReference type="RefSeq" id="NP_001368897.1">
    <molecule id="P17027-2"/>
    <property type="nucleotide sequence ID" value="NM_001381968.1"/>
</dbReference>
<dbReference type="RefSeq" id="NP_001368898.1">
    <molecule id="P17027-2"/>
    <property type="nucleotide sequence ID" value="NM_001381969.1"/>
</dbReference>
<dbReference type="RefSeq" id="NP_001368899.1">
    <molecule id="P17027-2"/>
    <property type="nucleotide sequence ID" value="NM_001381970.1"/>
</dbReference>
<dbReference type="RefSeq" id="NP_001368900.1">
    <molecule id="P17027-2"/>
    <property type="nucleotide sequence ID" value="NM_001381971.1"/>
</dbReference>
<dbReference type="RefSeq" id="NP_001368901.1">
    <molecule id="P17027-2"/>
    <property type="nucleotide sequence ID" value="NM_001381972.1"/>
</dbReference>
<dbReference type="RefSeq" id="NP_666016.1">
    <molecule id="P17027-1"/>
    <property type="nucleotide sequence ID" value="NM_145911.3"/>
</dbReference>
<dbReference type="SMR" id="P17027"/>
<dbReference type="BioGRID" id="113402">
    <property type="interactions" value="32"/>
</dbReference>
<dbReference type="FunCoup" id="P17027">
    <property type="interactions" value="34"/>
</dbReference>
<dbReference type="IntAct" id="P17027">
    <property type="interactions" value="25"/>
</dbReference>
<dbReference type="MINT" id="P17027"/>
<dbReference type="STRING" id="9606.ENSP00000377171"/>
<dbReference type="GlyGen" id="P17027">
    <property type="glycosylation" value="1 site, 1 O-linked glycan (1 site)"/>
</dbReference>
<dbReference type="iPTMnet" id="P17027"/>
<dbReference type="PhosphoSitePlus" id="P17027"/>
<dbReference type="BioMuta" id="ZNF23"/>
<dbReference type="DMDM" id="29840831"/>
<dbReference type="jPOST" id="P17027"/>
<dbReference type="MassIVE" id="P17027"/>
<dbReference type="PaxDb" id="9606-ENSP00000377171"/>
<dbReference type="PeptideAtlas" id="P17027"/>
<dbReference type="ProteomicsDB" id="53428">
    <molecule id="P17027-1"/>
</dbReference>
<dbReference type="ProteomicsDB" id="73048"/>
<dbReference type="Antibodypedia" id="16582">
    <property type="antibodies" value="165 antibodies from 30 providers"/>
</dbReference>
<dbReference type="DNASU" id="7571"/>
<dbReference type="Ensembl" id="ENST00000357254.8">
    <molecule id="P17027-1"/>
    <property type="protein sequence ID" value="ENSP00000349796.4"/>
    <property type="gene ID" value="ENSG00000167377.19"/>
</dbReference>
<dbReference type="Ensembl" id="ENST00000393539.6">
    <molecule id="P17027-1"/>
    <property type="protein sequence ID" value="ENSP00000377171.2"/>
    <property type="gene ID" value="ENSG00000167377.19"/>
</dbReference>
<dbReference type="Ensembl" id="ENST00000428724.5">
    <molecule id="P17027-1"/>
    <property type="protein sequence ID" value="ENSP00000387673.3"/>
    <property type="gene ID" value="ENSG00000167377.19"/>
</dbReference>
<dbReference type="Ensembl" id="ENST00000564528.1">
    <molecule id="P17027-2"/>
    <property type="protein sequence ID" value="ENSP00000462429.1"/>
    <property type="gene ID" value="ENSG00000167377.19"/>
</dbReference>
<dbReference type="GeneID" id="7571"/>
<dbReference type="KEGG" id="hsa:7571"/>
<dbReference type="UCSC" id="uc002fad.4">
    <molecule id="P17027-1"/>
    <property type="organism name" value="human"/>
</dbReference>
<dbReference type="AGR" id="HGNC:13023"/>
<dbReference type="CTD" id="7571"/>
<dbReference type="DisGeNET" id="7571"/>
<dbReference type="GeneCards" id="ZNF23"/>
<dbReference type="HGNC" id="HGNC:13023">
    <property type="gene designation" value="ZNF23"/>
</dbReference>
<dbReference type="HPA" id="ENSG00000167377">
    <property type="expression patterns" value="Low tissue specificity"/>
</dbReference>
<dbReference type="MIM" id="194527">
    <property type="type" value="gene"/>
</dbReference>
<dbReference type="neXtProt" id="NX_P17027"/>
<dbReference type="OpenTargets" id="ENSG00000167377"/>
<dbReference type="PharmGKB" id="PA37602"/>
<dbReference type="VEuPathDB" id="HostDB:ENSG00000167377"/>
<dbReference type="eggNOG" id="KOG1721">
    <property type="taxonomic scope" value="Eukaryota"/>
</dbReference>
<dbReference type="GeneTree" id="ENSGT00940000162377"/>
<dbReference type="HOGENOM" id="CLU_002678_44_7_1"/>
<dbReference type="InParanoid" id="P17027"/>
<dbReference type="OrthoDB" id="9411774at2759"/>
<dbReference type="PAN-GO" id="P17027">
    <property type="GO annotations" value="4 GO annotations based on evolutionary models"/>
</dbReference>
<dbReference type="PhylomeDB" id="P17027"/>
<dbReference type="TreeFam" id="TF350833"/>
<dbReference type="PathwayCommons" id="P17027"/>
<dbReference type="Reactome" id="R-HSA-212436">
    <property type="pathway name" value="Generic Transcription Pathway"/>
</dbReference>
<dbReference type="SignaLink" id="P17027"/>
<dbReference type="BioGRID-ORCS" id="7571">
    <property type="hits" value="9 hits in 1182 CRISPR screens"/>
</dbReference>
<dbReference type="ChiTaRS" id="ZNF23">
    <property type="organism name" value="human"/>
</dbReference>
<dbReference type="GeneWiki" id="ZNF23"/>
<dbReference type="GenomeRNAi" id="7571"/>
<dbReference type="Pharos" id="P17027">
    <property type="development level" value="Tbio"/>
</dbReference>
<dbReference type="PRO" id="PR:P17027"/>
<dbReference type="Proteomes" id="UP000005640">
    <property type="component" value="Chromosome 16"/>
</dbReference>
<dbReference type="RNAct" id="P17027">
    <property type="molecule type" value="protein"/>
</dbReference>
<dbReference type="Bgee" id="ENSG00000167377">
    <property type="expression patterns" value="Expressed in cortical plate and 95 other cell types or tissues"/>
</dbReference>
<dbReference type="ExpressionAtlas" id="P17027">
    <property type="expression patterns" value="baseline and differential"/>
</dbReference>
<dbReference type="GO" id="GO:0005634">
    <property type="term" value="C:nucleus"/>
    <property type="evidence" value="ECO:0000318"/>
    <property type="project" value="GO_Central"/>
</dbReference>
<dbReference type="GO" id="GO:0000981">
    <property type="term" value="F:DNA-binding transcription factor activity, RNA polymerase II-specific"/>
    <property type="evidence" value="ECO:0000318"/>
    <property type="project" value="GO_Central"/>
</dbReference>
<dbReference type="GO" id="GO:0000978">
    <property type="term" value="F:RNA polymerase II cis-regulatory region sequence-specific DNA binding"/>
    <property type="evidence" value="ECO:0000318"/>
    <property type="project" value="GO_Central"/>
</dbReference>
<dbReference type="GO" id="GO:1990837">
    <property type="term" value="F:sequence-specific double-stranded DNA binding"/>
    <property type="evidence" value="ECO:0000314"/>
    <property type="project" value="ARUK-UCL"/>
</dbReference>
<dbReference type="GO" id="GO:0008270">
    <property type="term" value="F:zinc ion binding"/>
    <property type="evidence" value="ECO:0007669"/>
    <property type="project" value="UniProtKB-KW"/>
</dbReference>
<dbReference type="GO" id="GO:0006357">
    <property type="term" value="P:regulation of transcription by RNA polymerase II"/>
    <property type="evidence" value="ECO:0000318"/>
    <property type="project" value="GO_Central"/>
</dbReference>
<dbReference type="FunFam" id="3.30.160.60:FF:004935">
    <property type="match status" value="1"/>
</dbReference>
<dbReference type="FunFam" id="3.30.160.60:FF:000274">
    <property type="entry name" value="zinc finger protein 16"/>
    <property type="match status" value="1"/>
</dbReference>
<dbReference type="FunFam" id="3.30.160.60:FF:001943">
    <property type="entry name" value="Zinc finger protein 23"/>
    <property type="match status" value="1"/>
</dbReference>
<dbReference type="FunFam" id="3.30.160.60:FF:001298">
    <property type="entry name" value="zinc finger protein 23 isoform X1"/>
    <property type="match status" value="2"/>
</dbReference>
<dbReference type="FunFam" id="3.30.160.60:FF:000812">
    <property type="entry name" value="zinc finger protein 23 isoform X2"/>
    <property type="match status" value="1"/>
</dbReference>
<dbReference type="FunFam" id="3.30.160.60:FF:000003">
    <property type="entry name" value="Zinc finger protein 3 homolog"/>
    <property type="match status" value="1"/>
</dbReference>
<dbReference type="FunFam" id="3.30.160.60:FF:000352">
    <property type="entry name" value="zinc finger protein 3 homolog"/>
    <property type="match status" value="2"/>
</dbReference>
<dbReference type="FunFam" id="3.30.160.60:FF:002343">
    <property type="entry name" value="Zinc finger protein 33A"/>
    <property type="match status" value="2"/>
</dbReference>
<dbReference type="FunFam" id="3.30.160.60:FF:002402">
    <property type="entry name" value="Zinc finger protein 347"/>
    <property type="match status" value="1"/>
</dbReference>
<dbReference type="FunFam" id="3.30.160.60:FF:001498">
    <property type="entry name" value="Zinc finger protein 404"/>
    <property type="match status" value="1"/>
</dbReference>
<dbReference type="FunFam" id="3.30.160.60:FF:001882">
    <property type="entry name" value="Zinc finger protein 473"/>
    <property type="match status" value="1"/>
</dbReference>
<dbReference type="FunFam" id="3.30.160.60:FF:002254">
    <property type="entry name" value="Zinc finger protein 540"/>
    <property type="match status" value="1"/>
</dbReference>
<dbReference type="FunFam" id="3.30.160.60:FF:000737">
    <property type="entry name" value="Zinc finger protein 565"/>
    <property type="match status" value="1"/>
</dbReference>
<dbReference type="FunFam" id="3.30.160.60:FF:000069">
    <property type="entry name" value="Zinc finger protein 572"/>
    <property type="match status" value="1"/>
</dbReference>
<dbReference type="Gene3D" id="3.30.160.60">
    <property type="entry name" value="Classic Zinc Finger"/>
    <property type="match status" value="17"/>
</dbReference>
<dbReference type="InterPro" id="IPR001909">
    <property type="entry name" value="KRAB"/>
</dbReference>
<dbReference type="InterPro" id="IPR050826">
    <property type="entry name" value="Krueppel_C2H2_ZnFinger"/>
</dbReference>
<dbReference type="InterPro" id="IPR036236">
    <property type="entry name" value="Znf_C2H2_sf"/>
</dbReference>
<dbReference type="InterPro" id="IPR013087">
    <property type="entry name" value="Znf_C2H2_type"/>
</dbReference>
<dbReference type="PANTHER" id="PTHR24377">
    <property type="entry name" value="IP01015P-RELATED"/>
    <property type="match status" value="1"/>
</dbReference>
<dbReference type="Pfam" id="PF00096">
    <property type="entry name" value="zf-C2H2"/>
    <property type="match status" value="15"/>
</dbReference>
<dbReference type="SMART" id="SM00355">
    <property type="entry name" value="ZnF_C2H2"/>
    <property type="match status" value="16"/>
</dbReference>
<dbReference type="SUPFAM" id="SSF57667">
    <property type="entry name" value="beta-beta-alpha zinc fingers"/>
    <property type="match status" value="11"/>
</dbReference>
<dbReference type="PROSITE" id="PS50805">
    <property type="entry name" value="KRAB"/>
    <property type="match status" value="1"/>
</dbReference>
<dbReference type="PROSITE" id="PS00028">
    <property type="entry name" value="ZINC_FINGER_C2H2_1"/>
    <property type="match status" value="16"/>
</dbReference>
<dbReference type="PROSITE" id="PS50157">
    <property type="entry name" value="ZINC_FINGER_C2H2_2"/>
    <property type="match status" value="17"/>
</dbReference>
<accession>P17027</accession>
<accession>Q8NDP5</accession>
<accession>Q96IT3</accession>
<accession>Q9UG42</accession>
<comment type="function">
    <text>May be involved in transcriptional regulation. May have a role in embryonic development.</text>
</comment>
<comment type="interaction">
    <interactant intactId="EBI-5657766">
        <id>P17027</id>
    </interactant>
    <interactant intactId="EBI-1166928">
        <id>Q8N5M1</id>
        <label>ATPAF2</label>
    </interactant>
    <organismsDiffer>false</organismsDiffer>
    <experiments>3</experiments>
</comment>
<comment type="interaction">
    <interactant intactId="EBI-5657766">
        <id>P17027</id>
    </interactant>
    <interactant intactId="EBI-741705">
        <id>Q8IYF1</id>
        <label>ELOA2</label>
    </interactant>
    <organismsDiffer>false</organismsDiffer>
    <experiments>3</experiments>
</comment>
<comment type="interaction">
    <interactant intactId="EBI-5657766">
        <id>P17027</id>
    </interactant>
    <interactant intactId="EBI-701903">
        <id>Q14192</id>
        <label>FHL2</label>
    </interactant>
    <organismsDiffer>false</organismsDiffer>
    <experiments>3</experiments>
</comment>
<comment type="interaction">
    <interactant intactId="EBI-5657766">
        <id>P17027</id>
    </interactant>
    <interactant intactId="EBI-750641">
        <id>Q5TD97</id>
        <label>FHL5</label>
    </interactant>
    <organismsDiffer>false</organismsDiffer>
    <experiments>3</experiments>
</comment>
<comment type="interaction">
    <interactant intactId="EBI-5657766">
        <id>P17027</id>
    </interactant>
    <interactant intactId="EBI-2548508">
        <id>Q96IK5</id>
        <label>GMCL1</label>
    </interactant>
    <organismsDiffer>false</organismsDiffer>
    <experiments>3</experiments>
</comment>
<comment type="interaction">
    <interactant intactId="EBI-5657766">
        <id>P17027</id>
    </interactant>
    <interactant intactId="EBI-10171774">
        <id>P60410</id>
        <label>KRTAP10-8</label>
    </interactant>
    <organismsDiffer>false</organismsDiffer>
    <experiments>3</experiments>
</comment>
<comment type="interaction">
    <interactant intactId="EBI-5657766">
        <id>P17027</id>
    </interactant>
    <interactant intactId="EBI-348259">
        <id>Q96EZ8</id>
        <label>MCRS1</label>
    </interactant>
    <organismsDiffer>false</organismsDiffer>
    <experiments>3</experiments>
</comment>
<comment type="interaction">
    <interactant intactId="EBI-5657766">
        <id>P17027</id>
    </interactant>
    <interactant intactId="EBI-724076">
        <id>Q99750</id>
        <label>MDFI</label>
    </interactant>
    <organismsDiffer>false</organismsDiffer>
    <experiments>3</experiments>
</comment>
<comment type="interaction">
    <interactant intactId="EBI-5657766">
        <id>P17027</id>
    </interactant>
    <interactant intactId="EBI-16439278">
        <id>Q6FHY5</id>
        <label>MEOX2</label>
    </interactant>
    <organismsDiffer>false</organismsDiffer>
    <experiments>3</experiments>
</comment>
<comment type="interaction">
    <interactant intactId="EBI-5657766">
        <id>P17027</id>
    </interactant>
    <interactant intactId="EBI-12013470">
        <id>Q13875-3</id>
        <label>MOBP</label>
    </interactant>
    <organismsDiffer>false</organismsDiffer>
    <experiments>3</experiments>
</comment>
<comment type="interaction">
    <interactant intactId="EBI-5657766">
        <id>P17027</id>
    </interactant>
    <interactant intactId="EBI-11522433">
        <id>Q5JR59-3</id>
        <label>MTUS2</label>
    </interactant>
    <organismsDiffer>false</organismsDiffer>
    <experiments>3</experiments>
</comment>
<comment type="interaction">
    <interactant intactId="EBI-5657766">
        <id>P17027</id>
    </interactant>
    <interactant intactId="EBI-744782">
        <id>Q9Y5B8</id>
        <label>NME7</label>
    </interactant>
    <organismsDiffer>false</organismsDiffer>
    <experiments>3</experiments>
</comment>
<comment type="interaction">
    <interactant intactId="EBI-5657766">
        <id>P17027</id>
    </interactant>
    <interactant intactId="EBI-5235340">
        <id>Q7Z699</id>
        <label>SPRED1</label>
    </interactant>
    <organismsDiffer>false</organismsDiffer>
    <experiments>3</experiments>
</comment>
<comment type="interaction">
    <interactant intactId="EBI-5657766">
        <id>P17027</id>
    </interactant>
    <interactant intactId="EBI-3866665">
        <id>O43609</id>
        <label>SPRY1</label>
    </interactant>
    <organismsDiffer>false</organismsDiffer>
    <experiments>4</experiments>
</comment>
<comment type="interaction">
    <interactant intactId="EBI-5657766">
        <id>P17027</id>
    </interactant>
    <interactant intactId="EBI-359224">
        <id>Q13077</id>
        <label>TRAF1</label>
    </interactant>
    <organismsDiffer>false</organismsDiffer>
    <experiments>3</experiments>
</comment>
<comment type="interaction">
    <interactant intactId="EBI-5657766">
        <id>P17027</id>
    </interactant>
    <interactant intactId="EBI-744794">
        <id>Q9BZW7</id>
        <label>TSGA10</label>
    </interactant>
    <organismsDiffer>false</organismsDiffer>
    <experiments>3</experiments>
</comment>
<comment type="interaction">
    <interactant intactId="EBI-5657766">
        <id>P17027</id>
    </interactant>
    <interactant intactId="EBI-373456">
        <id>Q9Y3S2</id>
        <label>ZNF330</label>
    </interactant>
    <organismsDiffer>false</organismsDiffer>
    <experiments>3</experiments>
</comment>
<comment type="subcellular location">
    <subcellularLocation>
        <location evidence="5">Nucleus</location>
    </subcellularLocation>
</comment>
<comment type="alternative products">
    <event type="alternative splicing"/>
    <isoform>
        <id>P17027-1</id>
        <name>1</name>
        <sequence type="displayed"/>
    </isoform>
    <isoform>
        <id>P17027-2</id>
        <name>2</name>
        <sequence type="described" ref="VSP_055936"/>
    </isoform>
</comment>
<comment type="similarity">
    <text evidence="5">Belongs to the krueppel C2H2-type zinc-finger protein family.</text>
</comment>
<protein>
    <recommendedName>
        <fullName>Zinc finger protein 23</fullName>
    </recommendedName>
    <alternativeName>
        <fullName>Zinc finger protein 359</fullName>
    </alternativeName>
    <alternativeName>
        <fullName>Zinc finger protein 612</fullName>
    </alternativeName>
    <alternativeName>
        <fullName>Zinc finger protein KOX16</fullName>
    </alternativeName>
</protein>
<evidence type="ECO:0000255" key="1">
    <source>
        <dbReference type="PROSITE-ProRule" id="PRU00042"/>
    </source>
</evidence>
<evidence type="ECO:0000255" key="2">
    <source>
        <dbReference type="PROSITE-ProRule" id="PRU00119"/>
    </source>
</evidence>
<evidence type="ECO:0000303" key="3">
    <source>
    </source>
</evidence>
<evidence type="ECO:0000303" key="4">
    <source>
    </source>
</evidence>
<evidence type="ECO:0000305" key="5"/>
<evidence type="ECO:0007744" key="6">
    <source>
    </source>
</evidence>
<feature type="chain" id="PRO_0000047351" description="Zinc finger protein 23">
    <location>
        <begin position="1"/>
        <end position="643"/>
    </location>
</feature>
<feature type="domain" description="KRAB" evidence="2">
    <location>
        <begin position="1"/>
        <end position="43"/>
    </location>
</feature>
<feature type="zinc finger region" description="C2H2-type 1; degenerate" evidence="1">
    <location>
        <begin position="168"/>
        <end position="190"/>
    </location>
</feature>
<feature type="zinc finger region" description="C2H2-type 2" evidence="1">
    <location>
        <begin position="196"/>
        <end position="218"/>
    </location>
</feature>
<feature type="zinc finger region" description="C2H2-type 3" evidence="1">
    <location>
        <begin position="224"/>
        <end position="246"/>
    </location>
</feature>
<feature type="zinc finger region" description="C2H2-type 4" evidence="1">
    <location>
        <begin position="252"/>
        <end position="274"/>
    </location>
</feature>
<feature type="zinc finger region" description="C2H2-type 5" evidence="1">
    <location>
        <begin position="280"/>
        <end position="302"/>
    </location>
</feature>
<feature type="zinc finger region" description="C2H2-type 6" evidence="1">
    <location>
        <begin position="308"/>
        <end position="330"/>
    </location>
</feature>
<feature type="zinc finger region" description="C2H2-type 7" evidence="1">
    <location>
        <begin position="336"/>
        <end position="358"/>
    </location>
</feature>
<feature type="zinc finger region" description="C2H2-type 8" evidence="1">
    <location>
        <begin position="364"/>
        <end position="386"/>
    </location>
</feature>
<feature type="zinc finger region" description="C2H2-type 9" evidence="1">
    <location>
        <begin position="392"/>
        <end position="414"/>
    </location>
</feature>
<feature type="zinc finger region" description="C2H2-type 10" evidence="1">
    <location>
        <begin position="420"/>
        <end position="442"/>
    </location>
</feature>
<feature type="zinc finger region" description="C2H2-type 11" evidence="1">
    <location>
        <begin position="448"/>
        <end position="470"/>
    </location>
</feature>
<feature type="zinc finger region" description="C2H2-type 12" evidence="1">
    <location>
        <begin position="476"/>
        <end position="498"/>
    </location>
</feature>
<feature type="zinc finger region" description="C2H2-type 13" evidence="1">
    <location>
        <begin position="504"/>
        <end position="526"/>
    </location>
</feature>
<feature type="zinc finger region" description="C2H2-type 14" evidence="1">
    <location>
        <begin position="532"/>
        <end position="554"/>
    </location>
</feature>
<feature type="zinc finger region" description="C2H2-type 15" evidence="1">
    <location>
        <begin position="560"/>
        <end position="582"/>
    </location>
</feature>
<feature type="zinc finger region" description="C2H2-type 16" evidence="1">
    <location>
        <begin position="588"/>
        <end position="610"/>
    </location>
</feature>
<feature type="zinc finger region" description="C2H2-type 17" evidence="1">
    <location>
        <begin position="616"/>
        <end position="638"/>
    </location>
</feature>
<feature type="cross-link" description="Glycyl lysine isopeptide (Lys-Gly) (interchain with G-Cter in SUMO2)" evidence="6">
    <location>
        <position position="157"/>
    </location>
</feature>
<feature type="splice variant" id="VSP_055936" description="In isoform 2." evidence="3 4">
    <location>
        <begin position="1"/>
        <end position="58"/>
    </location>
</feature>
<feature type="sequence variant" id="VAR_024195" description="In dbSNP:rs2070832.">
    <original>S</original>
    <variation>G</variation>
    <location>
        <position position="28"/>
    </location>
</feature>
<feature type="sequence conflict" description="In Ref. 5; CAB45722." evidence="5" ref="5">
    <original>Q</original>
    <variation>E</variation>
    <location>
        <position position="50"/>
    </location>
</feature>
<name>ZNF23_HUMAN</name>
<reference key="1">
    <citation type="journal article" date="2002" name="Biochem. Biophys. Res. Commun.">
        <title>Identification and characterization of two novel zinc finger genes, ZNF359 and ZFP28, in human development.</title>
        <authorList>
            <person name="Zhou L."/>
            <person name="Zhu C."/>
            <person name="Luo K."/>
            <person name="Li Y."/>
            <person name="Pi H."/>
            <person name="Yuan W."/>
            <person name="Wang Y."/>
            <person name="Huang C."/>
            <person name="Liu M."/>
            <person name="Wu X."/>
        </authorList>
    </citation>
    <scope>NUCLEOTIDE SEQUENCE [MRNA] (ISOFORM 1)</scope>
</reference>
<reference key="2">
    <citation type="submission" date="2003-05" db="EMBL/GenBank/DDBJ databases">
        <title>Cloning of human full-length CDSs in BD Creator(TM) system donor vector.</title>
        <authorList>
            <person name="Kalnine N."/>
            <person name="Chen X."/>
            <person name="Rolfs A."/>
            <person name="Halleck A."/>
            <person name="Hines L."/>
            <person name="Eisenstein S."/>
            <person name="Koundinya M."/>
            <person name="Raphael J."/>
            <person name="Moreira D."/>
            <person name="Kelley T."/>
            <person name="LaBaer J."/>
            <person name="Lin Y."/>
            <person name="Phelan M."/>
            <person name="Farmer A."/>
        </authorList>
    </citation>
    <scope>NUCLEOTIDE SEQUENCE [LARGE SCALE MRNA] (ISOFORM 1)</scope>
</reference>
<reference key="3">
    <citation type="journal article" date="2004" name="Nature">
        <title>The sequence and analysis of duplication-rich human chromosome 16.</title>
        <authorList>
            <person name="Martin J."/>
            <person name="Han C."/>
            <person name="Gordon L.A."/>
            <person name="Terry A."/>
            <person name="Prabhakar S."/>
            <person name="She X."/>
            <person name="Xie G."/>
            <person name="Hellsten U."/>
            <person name="Chan Y.M."/>
            <person name="Altherr M."/>
            <person name="Couronne O."/>
            <person name="Aerts A."/>
            <person name="Bajorek E."/>
            <person name="Black S."/>
            <person name="Blumer H."/>
            <person name="Branscomb E."/>
            <person name="Brown N.C."/>
            <person name="Bruno W.J."/>
            <person name="Buckingham J.M."/>
            <person name="Callen D.F."/>
            <person name="Campbell C.S."/>
            <person name="Campbell M.L."/>
            <person name="Campbell E.W."/>
            <person name="Caoile C."/>
            <person name="Challacombe J.F."/>
            <person name="Chasteen L.A."/>
            <person name="Chertkov O."/>
            <person name="Chi H.C."/>
            <person name="Christensen M."/>
            <person name="Clark L.M."/>
            <person name="Cohn J.D."/>
            <person name="Denys M."/>
            <person name="Detter J.C."/>
            <person name="Dickson M."/>
            <person name="Dimitrijevic-Bussod M."/>
            <person name="Escobar J."/>
            <person name="Fawcett J.J."/>
            <person name="Flowers D."/>
            <person name="Fotopulos D."/>
            <person name="Glavina T."/>
            <person name="Gomez M."/>
            <person name="Gonzales E."/>
            <person name="Goodstein D."/>
            <person name="Goodwin L.A."/>
            <person name="Grady D.L."/>
            <person name="Grigoriev I."/>
            <person name="Groza M."/>
            <person name="Hammon N."/>
            <person name="Hawkins T."/>
            <person name="Haydu L."/>
            <person name="Hildebrand C.E."/>
            <person name="Huang W."/>
            <person name="Israni S."/>
            <person name="Jett J."/>
            <person name="Jewett P.B."/>
            <person name="Kadner K."/>
            <person name="Kimball H."/>
            <person name="Kobayashi A."/>
            <person name="Krawczyk M.-C."/>
            <person name="Leyba T."/>
            <person name="Longmire J.L."/>
            <person name="Lopez F."/>
            <person name="Lou Y."/>
            <person name="Lowry S."/>
            <person name="Ludeman T."/>
            <person name="Manohar C.F."/>
            <person name="Mark G.A."/>
            <person name="McMurray K.L."/>
            <person name="Meincke L.J."/>
            <person name="Morgan J."/>
            <person name="Moyzis R.K."/>
            <person name="Mundt M.O."/>
            <person name="Munk A.C."/>
            <person name="Nandkeshwar R.D."/>
            <person name="Pitluck S."/>
            <person name="Pollard M."/>
            <person name="Predki P."/>
            <person name="Parson-Quintana B."/>
            <person name="Ramirez L."/>
            <person name="Rash S."/>
            <person name="Retterer J."/>
            <person name="Ricke D.O."/>
            <person name="Robinson D.L."/>
            <person name="Rodriguez A."/>
            <person name="Salamov A."/>
            <person name="Saunders E.H."/>
            <person name="Scott D."/>
            <person name="Shough T."/>
            <person name="Stallings R.L."/>
            <person name="Stalvey M."/>
            <person name="Sutherland R.D."/>
            <person name="Tapia R."/>
            <person name="Tesmer J.G."/>
            <person name="Thayer N."/>
            <person name="Thompson L.S."/>
            <person name="Tice H."/>
            <person name="Torney D.C."/>
            <person name="Tran-Gyamfi M."/>
            <person name="Tsai M."/>
            <person name="Ulanovsky L.E."/>
            <person name="Ustaszewska A."/>
            <person name="Vo N."/>
            <person name="White P.S."/>
            <person name="Williams A.L."/>
            <person name="Wills P.L."/>
            <person name="Wu J.-R."/>
            <person name="Wu K."/>
            <person name="Yang J."/>
            <person name="DeJong P."/>
            <person name="Bruce D."/>
            <person name="Doggett N.A."/>
            <person name="Deaven L."/>
            <person name="Schmutz J."/>
            <person name="Grimwood J."/>
            <person name="Richardson P."/>
            <person name="Rokhsar D.S."/>
            <person name="Eichler E.E."/>
            <person name="Gilna P."/>
            <person name="Lucas S.M."/>
            <person name="Myers R.M."/>
            <person name="Rubin E.M."/>
            <person name="Pennacchio L.A."/>
        </authorList>
    </citation>
    <scope>NUCLEOTIDE SEQUENCE [LARGE SCALE GENOMIC DNA]</scope>
</reference>
<reference key="4">
    <citation type="journal article" date="2007" name="BMC Genomics">
        <title>The full-ORF clone resource of the German cDNA consortium.</title>
        <authorList>
            <person name="Bechtel S."/>
            <person name="Rosenfelder H."/>
            <person name="Duda A."/>
            <person name="Schmidt C.P."/>
            <person name="Ernst U."/>
            <person name="Wellenreuther R."/>
            <person name="Mehrle A."/>
            <person name="Schuster C."/>
            <person name="Bahr A."/>
            <person name="Bloecker H."/>
            <person name="Heubner D."/>
            <person name="Hoerlein A."/>
            <person name="Michel G."/>
            <person name="Wedler H."/>
            <person name="Koehrer K."/>
            <person name="Ottenwaelder B."/>
            <person name="Poustka A."/>
            <person name="Wiemann S."/>
            <person name="Schupp I."/>
        </authorList>
    </citation>
    <scope>NUCLEOTIDE SEQUENCE [LARGE SCALE MRNA] (ISOFORM 2)</scope>
    <scope>NUCLEOTIDE SEQUENCE [LARGE SCALE MRNA] OF 50-643 (ISOFORM 1)</scope>
    <source>
        <tissue>Hippocampus</tissue>
    </source>
</reference>
<reference key="5">
    <citation type="journal article" date="2004" name="Genome Res.">
        <title>The status, quality, and expansion of the NIH full-length cDNA project: the Mammalian Gene Collection (MGC).</title>
        <authorList>
            <consortium name="The MGC Project Team"/>
        </authorList>
    </citation>
    <scope>NUCLEOTIDE SEQUENCE [LARGE SCALE MRNA] (ISOFORMS 1 AND 2)</scope>
    <source>
        <tissue>Brain</tissue>
        <tissue>Muscle</tissue>
    </source>
</reference>
<reference key="6">
    <citation type="journal article" date="1990" name="New Biol.">
        <title>Multiple genes encoding zinc finger domains are expressed in human T cells.</title>
        <authorList>
            <person name="Thiesen H.-J."/>
        </authorList>
    </citation>
    <scope>NUCLEOTIDE SEQUENCE [MRNA] OF 476-531 (ISOFORM 1)</scope>
    <source>
        <tissue>Lymphoid tissue</tissue>
    </source>
</reference>
<reference key="7">
    <citation type="journal article" date="2017" name="Nat. Struct. Mol. Biol.">
        <title>Site-specific mapping of the human SUMO proteome reveals co-modification with phosphorylation.</title>
        <authorList>
            <person name="Hendriks I.A."/>
            <person name="Lyon D."/>
            <person name="Young C."/>
            <person name="Jensen L.J."/>
            <person name="Vertegaal A.C."/>
            <person name="Nielsen M.L."/>
        </authorList>
    </citation>
    <scope>SUMOYLATION [LARGE SCALE ANALYSIS] AT LYS-157</scope>
    <scope>IDENTIFICATION BY MASS SPECTROMETRY [LARGE SCALE ANALYSIS]</scope>
</reference>
<keyword id="KW-0025">Alternative splicing</keyword>
<keyword id="KW-0238">DNA-binding</keyword>
<keyword id="KW-1017">Isopeptide bond</keyword>
<keyword id="KW-0479">Metal-binding</keyword>
<keyword id="KW-0539">Nucleus</keyword>
<keyword id="KW-1267">Proteomics identification</keyword>
<keyword id="KW-1185">Reference proteome</keyword>
<keyword id="KW-0677">Repeat</keyword>
<keyword id="KW-0804">Transcription</keyword>
<keyword id="KW-0805">Transcription regulation</keyword>
<keyword id="KW-0832">Ubl conjugation</keyword>
<keyword id="KW-0862">Zinc</keyword>
<keyword id="KW-0863">Zinc-finger</keyword>
<proteinExistence type="evidence at protein level"/>
<gene>
    <name type="primary">ZNF23</name>
    <name type="synonym">KOX16</name>
    <name type="synonym">ZNF359</name>
    <name type="synonym">ZNF612</name>
</gene>
<sequence>MLENYGNVASLGFPLLKPAVISQLEGGSELGGSSPLAAGTGLQGLQTDIQTDNDLTKEMYEGKENVSFELQRDFSQETDFSEASLLEKQQEVHSAGNIKKEKSNTIDGTVKDETSPVEECFFSQSSNSYQCHTITGEQPSGCTGLGKSISFDTKLVKHEIINSEERPFKCEELVEPFRCDSQLIQHQENNTEEKPYQCSECGKAFSINEKLIWHQRLHSGEKPFKCVECGKSFSYSSHYITHQTIHSGEKPYQCKMCGKAFSVNGSLSRHQRIHTGEKPYQCKECGNGFSCSSAYITHQRVHTGEKPYECNDCGKAFNVNAKLIQHQRIHTGEKPYECNECGKGFRCSSQLRQHQSIHTGEKPYQCKECGKGFNNNTKLIQHQRIHTGEKPYECTECGKAFSVKGKLIQHQRIHTGEKPYECNECGKAFRCNSQFRQHLRIHTGEKPYECNECGKAFSVNGKLMRHQRIHTGEKPFECNECGRCFTSKRNLLDHHRIHTGEKPYQCKECGKAFSINAKLTRHQRIHTGEKPFKCMECEKAFSCSSNYIVHQRIHTGEKPFQCKECGKAFHVNAHLIRHQRSHTGEKPFRCVECGKGFSFSSDYIIHQTVHTWKKPYMCSVCGKAFRFSFQLSQHQSVHSEGKS</sequence>
<organism>
    <name type="scientific">Homo sapiens</name>
    <name type="common">Human</name>
    <dbReference type="NCBI Taxonomy" id="9606"/>
    <lineage>
        <taxon>Eukaryota</taxon>
        <taxon>Metazoa</taxon>
        <taxon>Chordata</taxon>
        <taxon>Craniata</taxon>
        <taxon>Vertebrata</taxon>
        <taxon>Euteleostomi</taxon>
        <taxon>Mammalia</taxon>
        <taxon>Eutheria</taxon>
        <taxon>Euarchontoglires</taxon>
        <taxon>Primates</taxon>
        <taxon>Haplorrhini</taxon>
        <taxon>Catarrhini</taxon>
        <taxon>Hominidae</taxon>
        <taxon>Homo</taxon>
    </lineage>
</organism>